<keyword id="KW-0997">Cell inner membrane</keyword>
<keyword id="KW-1003">Cell membrane</keyword>
<keyword id="KW-0472">Membrane</keyword>
<keyword id="KW-0812">Transmembrane</keyword>
<keyword id="KW-1133">Transmembrane helix</keyword>
<keyword id="KW-0813">Transport</keyword>
<organism>
    <name type="scientific">Shigella boydii serotype 4 (strain Sb227)</name>
    <dbReference type="NCBI Taxonomy" id="300268"/>
    <lineage>
        <taxon>Bacteria</taxon>
        <taxon>Pseudomonadati</taxon>
        <taxon>Pseudomonadota</taxon>
        <taxon>Gammaproteobacteria</taxon>
        <taxon>Enterobacterales</taxon>
        <taxon>Enterobacteriaceae</taxon>
        <taxon>Shigella</taxon>
    </lineage>
</organism>
<accession>Q31WA8</accession>
<proteinExistence type="inferred from homology"/>
<sequence length="655" mass="73535">MGIFSIANQHIRFAVKLATAIVLALFVGFHFQLETPRWAVLTAAIVAAGPAFAAGGEPYSGAIRYRGFLRIIGTFIGCIAGLVIIIAMIRAPLLMILVCCIWAGFCTWISSLVRIENSYAWGLAGYTALIIVITIQPEPLLTPQFAVERCSEIVIGIVCAIIADLLFSPRSIKQEVDRELESLLVAQYQLMQLCIKHGDGEVVDKAWGDLVRRTTGLQGMRSNLNMESSRWARANRRLKAINTLSLTLITQSCETYLIQNTRPELITDTFREFFDTPVETAQDVHKQLKRLRRVIAWTGERETPVTIYSWVAAATRYQLLKRGVISNTKINATEEEILQGEPEVKVESAERHHAMVNFWRTTLSCILGTLFWLWTGWTSGSGAMVMIAVVTSLAMRLPNPRMVAIDFIYGTLAALPLGLLYFLVIIPNTQQSMLLLCISLAVLGFFLGIEVQQRLLGSMGALASTINIIVLDNPMTFHFSQFLDSALGQIVGCVLAFTVILLVRDKSRDRTGRVLLNQFVSAAVSAMTTNVARRKENHLPALYQQLFLLMNKFPGDLPKFRLALTMIIAHQRLRDAPIPVNEDLSAFHRQMRRTADHVISARSDDKRRRYFGQLLEELEIYQEKLRIWQAPPQVTEPVHRLAGMLHKYQHALTDS</sequence>
<feature type="chain" id="PRO_0000300565" description="p-hydroxybenzoic acid efflux pump subunit AaeB">
    <location>
        <begin position="1"/>
        <end position="655"/>
    </location>
</feature>
<feature type="transmembrane region" description="Helical" evidence="1">
    <location>
        <begin position="13"/>
        <end position="33"/>
    </location>
</feature>
<feature type="transmembrane region" description="Helical" evidence="1">
    <location>
        <begin position="38"/>
        <end position="58"/>
    </location>
</feature>
<feature type="transmembrane region" description="Helical" evidence="1">
    <location>
        <begin position="69"/>
        <end position="89"/>
    </location>
</feature>
<feature type="transmembrane region" description="Helical" evidence="1">
    <location>
        <begin position="93"/>
        <end position="113"/>
    </location>
</feature>
<feature type="transmembrane region" description="Helical" evidence="1">
    <location>
        <begin position="121"/>
        <end position="141"/>
    </location>
</feature>
<feature type="transmembrane region" description="Helical" evidence="1">
    <location>
        <begin position="152"/>
        <end position="172"/>
    </location>
</feature>
<feature type="transmembrane region" description="Helical" evidence="1">
    <location>
        <begin position="370"/>
        <end position="390"/>
    </location>
</feature>
<feature type="transmembrane region" description="Helical" evidence="1">
    <location>
        <begin position="407"/>
        <end position="427"/>
    </location>
</feature>
<feature type="transmembrane region" description="Helical" evidence="1">
    <location>
        <begin position="431"/>
        <end position="451"/>
    </location>
</feature>
<feature type="transmembrane region" description="Helical" evidence="1">
    <location>
        <begin position="455"/>
        <end position="475"/>
    </location>
</feature>
<feature type="transmembrane region" description="Helical" evidence="1">
    <location>
        <begin position="482"/>
        <end position="502"/>
    </location>
</feature>
<dbReference type="EMBL" id="CP000036">
    <property type="protein sequence ID" value="ABB67650.1"/>
    <property type="molecule type" value="Genomic_DNA"/>
</dbReference>
<dbReference type="RefSeq" id="WP_000510930.1">
    <property type="nucleotide sequence ID" value="NC_007613.1"/>
</dbReference>
<dbReference type="SMR" id="Q31WA8"/>
<dbReference type="KEGG" id="sbo:SBO_3149"/>
<dbReference type="HOGENOM" id="CLU_027647_0_0_6"/>
<dbReference type="Proteomes" id="UP000007067">
    <property type="component" value="Chromosome"/>
</dbReference>
<dbReference type="GO" id="GO:0005886">
    <property type="term" value="C:plasma membrane"/>
    <property type="evidence" value="ECO:0007669"/>
    <property type="project" value="UniProtKB-SubCell"/>
</dbReference>
<dbReference type="GO" id="GO:0022857">
    <property type="term" value="F:transmembrane transporter activity"/>
    <property type="evidence" value="ECO:0007669"/>
    <property type="project" value="UniProtKB-UniRule"/>
</dbReference>
<dbReference type="GO" id="GO:0046942">
    <property type="term" value="P:carboxylic acid transport"/>
    <property type="evidence" value="ECO:0007669"/>
    <property type="project" value="InterPro"/>
</dbReference>
<dbReference type="HAMAP" id="MF_01545">
    <property type="entry name" value="AaeB"/>
    <property type="match status" value="1"/>
</dbReference>
<dbReference type="InterPro" id="IPR006726">
    <property type="entry name" value="PHBA_efflux_AaeB/fusaric-R"/>
</dbReference>
<dbReference type="InterPro" id="IPR023706">
    <property type="entry name" value="PHBA_efflux_pump_AaeB"/>
</dbReference>
<dbReference type="NCBIfam" id="NF007916">
    <property type="entry name" value="PRK10631.1"/>
    <property type="match status" value="1"/>
</dbReference>
<dbReference type="PANTHER" id="PTHR30509:SF9">
    <property type="entry name" value="MULTIDRUG RESISTANCE PROTEIN MDTO"/>
    <property type="match status" value="1"/>
</dbReference>
<dbReference type="PANTHER" id="PTHR30509">
    <property type="entry name" value="P-HYDROXYBENZOIC ACID EFFLUX PUMP SUBUNIT-RELATED"/>
    <property type="match status" value="1"/>
</dbReference>
<dbReference type="Pfam" id="PF04632">
    <property type="entry name" value="FUSC"/>
    <property type="match status" value="1"/>
</dbReference>
<comment type="function">
    <text evidence="1">Forms an efflux pump with AaeA. Could function as a metabolic relief valve, allowing to eliminate certain compounds when they accumulate to high levels in the cell.</text>
</comment>
<comment type="subcellular location">
    <subcellularLocation>
        <location evidence="1">Cell inner membrane</location>
        <topology evidence="1">Multi-pass membrane protein</topology>
    </subcellularLocation>
</comment>
<comment type="similarity">
    <text evidence="1">Belongs to the aromatic acid exporter ArAE (TC 2.A.85) family.</text>
</comment>
<name>AAEB_SHIBS</name>
<gene>
    <name evidence="1" type="primary">aaeB</name>
    <name type="ordered locus">SBO_3149</name>
</gene>
<evidence type="ECO:0000255" key="1">
    <source>
        <dbReference type="HAMAP-Rule" id="MF_01545"/>
    </source>
</evidence>
<reference key="1">
    <citation type="journal article" date="2005" name="Nucleic Acids Res.">
        <title>Genome dynamics and diversity of Shigella species, the etiologic agents of bacillary dysentery.</title>
        <authorList>
            <person name="Yang F."/>
            <person name="Yang J."/>
            <person name="Zhang X."/>
            <person name="Chen L."/>
            <person name="Jiang Y."/>
            <person name="Yan Y."/>
            <person name="Tang X."/>
            <person name="Wang J."/>
            <person name="Xiong Z."/>
            <person name="Dong J."/>
            <person name="Xue Y."/>
            <person name="Zhu Y."/>
            <person name="Xu X."/>
            <person name="Sun L."/>
            <person name="Chen S."/>
            <person name="Nie H."/>
            <person name="Peng J."/>
            <person name="Xu J."/>
            <person name="Wang Y."/>
            <person name="Yuan Z."/>
            <person name="Wen Y."/>
            <person name="Yao Z."/>
            <person name="Shen Y."/>
            <person name="Qiang B."/>
            <person name="Hou Y."/>
            <person name="Yu J."/>
            <person name="Jin Q."/>
        </authorList>
    </citation>
    <scope>NUCLEOTIDE SEQUENCE [LARGE SCALE GENOMIC DNA]</scope>
    <source>
        <strain>Sb227</strain>
    </source>
</reference>
<protein>
    <recommendedName>
        <fullName evidence="1">p-hydroxybenzoic acid efflux pump subunit AaeB</fullName>
        <shortName evidence="1">pHBA efflux pump protein B</shortName>
    </recommendedName>
</protein>